<reference key="1">
    <citation type="submission" date="2008-02" db="EMBL/GenBank/DDBJ databases">
        <title>Complete sequence of Escherichia coli C str. ATCC 8739.</title>
        <authorList>
            <person name="Copeland A."/>
            <person name="Lucas S."/>
            <person name="Lapidus A."/>
            <person name="Glavina del Rio T."/>
            <person name="Dalin E."/>
            <person name="Tice H."/>
            <person name="Bruce D."/>
            <person name="Goodwin L."/>
            <person name="Pitluck S."/>
            <person name="Kiss H."/>
            <person name="Brettin T."/>
            <person name="Detter J.C."/>
            <person name="Han C."/>
            <person name="Kuske C.R."/>
            <person name="Schmutz J."/>
            <person name="Larimer F."/>
            <person name="Land M."/>
            <person name="Hauser L."/>
            <person name="Kyrpides N."/>
            <person name="Mikhailova N."/>
            <person name="Ingram L."/>
            <person name="Richardson P."/>
        </authorList>
    </citation>
    <scope>NUCLEOTIDE SEQUENCE [LARGE SCALE GENOMIC DNA]</scope>
    <source>
        <strain>ATCC 8739 / DSM 1576 / NBRC 3972 / NCIMB 8545 / WDCM 00012 / Crooks</strain>
    </source>
</reference>
<comment type="function">
    <text evidence="1">Converts 2C-methyl-D-erythritol 2,4-cyclodiphosphate (ME-2,4cPP) into 1-hydroxy-2-methyl-2-(E)-butenyl 4-diphosphate.</text>
</comment>
<comment type="catalytic activity">
    <reaction evidence="1">
        <text>(2E)-4-hydroxy-3-methylbut-2-enyl diphosphate + oxidized [flavodoxin] + H2O + 2 H(+) = 2-C-methyl-D-erythritol 2,4-cyclic diphosphate + reduced [flavodoxin]</text>
        <dbReference type="Rhea" id="RHEA:43604"/>
        <dbReference type="Rhea" id="RHEA-COMP:10622"/>
        <dbReference type="Rhea" id="RHEA-COMP:10623"/>
        <dbReference type="ChEBI" id="CHEBI:15377"/>
        <dbReference type="ChEBI" id="CHEBI:15378"/>
        <dbReference type="ChEBI" id="CHEBI:57618"/>
        <dbReference type="ChEBI" id="CHEBI:58210"/>
        <dbReference type="ChEBI" id="CHEBI:58483"/>
        <dbReference type="ChEBI" id="CHEBI:128753"/>
        <dbReference type="EC" id="1.17.7.3"/>
    </reaction>
</comment>
<comment type="cofactor">
    <cofactor evidence="1">
        <name>[4Fe-4S] cluster</name>
        <dbReference type="ChEBI" id="CHEBI:49883"/>
    </cofactor>
    <text evidence="1">Binds 1 [4Fe-4S] cluster.</text>
</comment>
<comment type="pathway">
    <text evidence="1">Isoprenoid biosynthesis; isopentenyl diphosphate biosynthesis via DXP pathway; isopentenyl diphosphate from 1-deoxy-D-xylulose 5-phosphate: step 5/6.</text>
</comment>
<comment type="similarity">
    <text evidence="1">Belongs to the IspG family.</text>
</comment>
<dbReference type="EC" id="1.17.7.3" evidence="1"/>
<dbReference type="EMBL" id="CP000946">
    <property type="protein sequence ID" value="ACA76829.1"/>
    <property type="molecule type" value="Genomic_DNA"/>
</dbReference>
<dbReference type="RefSeq" id="WP_000551807.1">
    <property type="nucleotide sequence ID" value="NZ_MTFT01000002.1"/>
</dbReference>
<dbReference type="SMR" id="B1IWE6"/>
<dbReference type="GeneID" id="86947404"/>
<dbReference type="KEGG" id="ecl:EcolC_1162"/>
<dbReference type="HOGENOM" id="CLU_042258_0_0_6"/>
<dbReference type="UniPathway" id="UPA00056">
    <property type="reaction ID" value="UER00096"/>
</dbReference>
<dbReference type="GO" id="GO:0051539">
    <property type="term" value="F:4 iron, 4 sulfur cluster binding"/>
    <property type="evidence" value="ECO:0007669"/>
    <property type="project" value="UniProtKB-UniRule"/>
</dbReference>
<dbReference type="GO" id="GO:0046429">
    <property type="term" value="F:4-hydroxy-3-methylbut-2-en-1-yl diphosphate synthase activity (ferredoxin)"/>
    <property type="evidence" value="ECO:0007669"/>
    <property type="project" value="UniProtKB-UniRule"/>
</dbReference>
<dbReference type="GO" id="GO:0141197">
    <property type="term" value="F:4-hydroxy-3-methylbut-2-enyl-diphosphate synthase activity (flavodoxin)"/>
    <property type="evidence" value="ECO:0007669"/>
    <property type="project" value="UniProtKB-EC"/>
</dbReference>
<dbReference type="GO" id="GO:0005506">
    <property type="term" value="F:iron ion binding"/>
    <property type="evidence" value="ECO:0007669"/>
    <property type="project" value="InterPro"/>
</dbReference>
<dbReference type="GO" id="GO:0019288">
    <property type="term" value="P:isopentenyl diphosphate biosynthetic process, methylerythritol 4-phosphate pathway"/>
    <property type="evidence" value="ECO:0007669"/>
    <property type="project" value="UniProtKB-UniRule"/>
</dbReference>
<dbReference type="GO" id="GO:0016114">
    <property type="term" value="P:terpenoid biosynthetic process"/>
    <property type="evidence" value="ECO:0007669"/>
    <property type="project" value="InterPro"/>
</dbReference>
<dbReference type="FunFam" id="3.20.20.20:FF:000001">
    <property type="entry name" value="4-hydroxy-3-methylbut-2-en-1-yl diphosphate synthase (flavodoxin)"/>
    <property type="match status" value="1"/>
</dbReference>
<dbReference type="FunFam" id="3.30.413.10:FF:000002">
    <property type="entry name" value="4-hydroxy-3-methylbut-2-en-1-yl diphosphate synthase (flavodoxin)"/>
    <property type="match status" value="1"/>
</dbReference>
<dbReference type="Gene3D" id="3.20.20.20">
    <property type="entry name" value="Dihydropteroate synthase-like"/>
    <property type="match status" value="1"/>
</dbReference>
<dbReference type="Gene3D" id="3.30.413.10">
    <property type="entry name" value="Sulfite Reductase Hemoprotein, domain 1"/>
    <property type="match status" value="1"/>
</dbReference>
<dbReference type="HAMAP" id="MF_00159">
    <property type="entry name" value="IspG"/>
    <property type="match status" value="1"/>
</dbReference>
<dbReference type="InterPro" id="IPR011005">
    <property type="entry name" value="Dihydropteroate_synth-like_sf"/>
</dbReference>
<dbReference type="InterPro" id="IPR016425">
    <property type="entry name" value="IspG_bac"/>
</dbReference>
<dbReference type="InterPro" id="IPR004588">
    <property type="entry name" value="IspG_bac-typ"/>
</dbReference>
<dbReference type="InterPro" id="IPR045854">
    <property type="entry name" value="NO2/SO3_Rdtase_4Fe4S_sf"/>
</dbReference>
<dbReference type="NCBIfam" id="TIGR00612">
    <property type="entry name" value="ispG_gcpE"/>
    <property type="match status" value="1"/>
</dbReference>
<dbReference type="NCBIfam" id="NF001540">
    <property type="entry name" value="PRK00366.1"/>
    <property type="match status" value="1"/>
</dbReference>
<dbReference type="PANTHER" id="PTHR30454">
    <property type="entry name" value="4-HYDROXY-3-METHYLBUT-2-EN-1-YL DIPHOSPHATE SYNTHASE"/>
    <property type="match status" value="1"/>
</dbReference>
<dbReference type="PANTHER" id="PTHR30454:SF0">
    <property type="entry name" value="4-HYDROXY-3-METHYLBUT-2-EN-1-YL DIPHOSPHATE SYNTHASE (FERREDOXIN), CHLOROPLASTIC"/>
    <property type="match status" value="1"/>
</dbReference>
<dbReference type="Pfam" id="PF04551">
    <property type="entry name" value="GcpE"/>
    <property type="match status" value="1"/>
</dbReference>
<dbReference type="PIRSF" id="PIRSF004640">
    <property type="entry name" value="IspG"/>
    <property type="match status" value="1"/>
</dbReference>
<dbReference type="SUPFAM" id="SSF51717">
    <property type="entry name" value="Dihydropteroate synthetase-like"/>
    <property type="match status" value="1"/>
</dbReference>
<dbReference type="SUPFAM" id="SSF56014">
    <property type="entry name" value="Nitrite and sulphite reductase 4Fe-4S domain-like"/>
    <property type="match status" value="1"/>
</dbReference>
<gene>
    <name evidence="1" type="primary">ispG</name>
    <name type="ordered locus">EcolC_1162</name>
</gene>
<protein>
    <recommendedName>
        <fullName evidence="1">4-hydroxy-3-methylbut-2-en-1-yl diphosphate synthase (flavodoxin)</fullName>
        <ecNumber evidence="1">1.17.7.3</ecNumber>
    </recommendedName>
    <alternativeName>
        <fullName evidence="1">1-hydroxy-2-methyl-2-(E)-butenyl 4-diphosphate synthase</fullName>
    </alternativeName>
</protein>
<organism>
    <name type="scientific">Escherichia coli (strain ATCC 8739 / DSM 1576 / NBRC 3972 / NCIMB 8545 / WDCM 00012 / Crooks)</name>
    <dbReference type="NCBI Taxonomy" id="481805"/>
    <lineage>
        <taxon>Bacteria</taxon>
        <taxon>Pseudomonadati</taxon>
        <taxon>Pseudomonadota</taxon>
        <taxon>Gammaproteobacteria</taxon>
        <taxon>Enterobacterales</taxon>
        <taxon>Enterobacteriaceae</taxon>
        <taxon>Escherichia</taxon>
    </lineage>
</organism>
<evidence type="ECO:0000255" key="1">
    <source>
        <dbReference type="HAMAP-Rule" id="MF_00159"/>
    </source>
</evidence>
<accession>B1IWE6</accession>
<sequence>MHNQAPIQRRKSTRIYVGNVPIGDGAPIAVQSMTNTRTTDVEATVNQIKALERVGADIVRVSVPTMDAAEAFKLIKQQVNVPLVADIHFDYRIALKVAEYGVDCLRINPGNIGNEERIRMVVDCARDKNIPIRIGVNAGSLEKDLQEKYGEPTPQALLESAMRHVDHLDRLNFDQFKVSVKASDVFLAVESYRLLAKQIDQPLHLGITEAGGARSGAVKSAIGLGLLLSEGIGDTLRVSLAADPVEEIKVGFDILKSLRIRSRGINFIACPTCSRQEFDVIGTVNALEQRLEDIITPMDVSIIGCVVNGPGEALVSTLGVTGGNKKSGLYEDGVRKDRLDNNDMIDQLEARIRAKASQLDEARRIDVQQVEK</sequence>
<feature type="chain" id="PRO_1000076884" description="4-hydroxy-3-methylbut-2-en-1-yl diphosphate synthase (flavodoxin)">
    <location>
        <begin position="1"/>
        <end position="372"/>
    </location>
</feature>
<feature type="binding site" evidence="1">
    <location>
        <position position="270"/>
    </location>
    <ligand>
        <name>[4Fe-4S] cluster</name>
        <dbReference type="ChEBI" id="CHEBI:49883"/>
    </ligand>
</feature>
<feature type="binding site" evidence="1">
    <location>
        <position position="273"/>
    </location>
    <ligand>
        <name>[4Fe-4S] cluster</name>
        <dbReference type="ChEBI" id="CHEBI:49883"/>
    </ligand>
</feature>
<feature type="binding site" evidence="1">
    <location>
        <position position="305"/>
    </location>
    <ligand>
        <name>[4Fe-4S] cluster</name>
        <dbReference type="ChEBI" id="CHEBI:49883"/>
    </ligand>
</feature>
<feature type="binding site" evidence="1">
    <location>
        <position position="312"/>
    </location>
    <ligand>
        <name>[4Fe-4S] cluster</name>
        <dbReference type="ChEBI" id="CHEBI:49883"/>
    </ligand>
</feature>
<proteinExistence type="inferred from homology"/>
<keyword id="KW-0004">4Fe-4S</keyword>
<keyword id="KW-0408">Iron</keyword>
<keyword id="KW-0411">Iron-sulfur</keyword>
<keyword id="KW-0414">Isoprene biosynthesis</keyword>
<keyword id="KW-0479">Metal-binding</keyword>
<keyword id="KW-0560">Oxidoreductase</keyword>
<name>ISPG_ECOLC</name>